<dbReference type="EC" id="7.3.2.5" evidence="1"/>
<dbReference type="EMBL" id="AE005674">
    <property type="protein sequence ID" value="AAN42183.1"/>
    <property type="molecule type" value="Genomic_DNA"/>
</dbReference>
<dbReference type="EMBL" id="AE014073">
    <property type="protein sequence ID" value="AAP16056.1"/>
    <property type="molecule type" value="Genomic_DNA"/>
</dbReference>
<dbReference type="RefSeq" id="NP_706476.1">
    <property type="nucleotide sequence ID" value="NC_004337.2"/>
</dbReference>
<dbReference type="RefSeq" id="WP_000891695.1">
    <property type="nucleotide sequence ID" value="NZ_WPGW01000046.1"/>
</dbReference>
<dbReference type="SMR" id="P59738"/>
<dbReference type="STRING" id="198214.SF0539"/>
<dbReference type="PaxDb" id="198214-SF0539"/>
<dbReference type="DNASU" id="1076981"/>
<dbReference type="GeneID" id="1023472"/>
<dbReference type="KEGG" id="sfl:SF0539"/>
<dbReference type="KEGG" id="sfx:S0547"/>
<dbReference type="PATRIC" id="fig|198214.7.peg.628"/>
<dbReference type="HOGENOM" id="CLU_000604_1_1_6"/>
<dbReference type="Proteomes" id="UP000001006">
    <property type="component" value="Chromosome"/>
</dbReference>
<dbReference type="Proteomes" id="UP000002673">
    <property type="component" value="Chromosome"/>
</dbReference>
<dbReference type="GO" id="GO:0005886">
    <property type="term" value="C:plasma membrane"/>
    <property type="evidence" value="ECO:0007669"/>
    <property type="project" value="UniProtKB-SubCell"/>
</dbReference>
<dbReference type="GO" id="GO:0015412">
    <property type="term" value="F:ABC-type molybdate transporter activity"/>
    <property type="evidence" value="ECO:0007669"/>
    <property type="project" value="UniProtKB-EC"/>
</dbReference>
<dbReference type="GO" id="GO:0005524">
    <property type="term" value="F:ATP binding"/>
    <property type="evidence" value="ECO:0007669"/>
    <property type="project" value="UniProtKB-KW"/>
</dbReference>
<dbReference type="GO" id="GO:0016887">
    <property type="term" value="F:ATP hydrolysis activity"/>
    <property type="evidence" value="ECO:0007669"/>
    <property type="project" value="InterPro"/>
</dbReference>
<dbReference type="FunFam" id="2.40.50.100:FF:000037">
    <property type="entry name" value="Molybdenum import ATP-binding protein ModC"/>
    <property type="match status" value="1"/>
</dbReference>
<dbReference type="FunFam" id="3.40.50.300:FF:000634">
    <property type="entry name" value="Molybdenum import ATP-binding protein ModC"/>
    <property type="match status" value="1"/>
</dbReference>
<dbReference type="Gene3D" id="2.40.50.100">
    <property type="match status" value="1"/>
</dbReference>
<dbReference type="Gene3D" id="3.40.50.300">
    <property type="entry name" value="P-loop containing nucleotide triphosphate hydrolases"/>
    <property type="match status" value="1"/>
</dbReference>
<dbReference type="InterPro" id="IPR003593">
    <property type="entry name" value="AAA+_ATPase"/>
</dbReference>
<dbReference type="InterPro" id="IPR003439">
    <property type="entry name" value="ABC_transporter-like_ATP-bd"/>
</dbReference>
<dbReference type="InterPro" id="IPR017871">
    <property type="entry name" value="ABC_transporter-like_CS"/>
</dbReference>
<dbReference type="InterPro" id="IPR008995">
    <property type="entry name" value="Mo/tungstate-bd_C_term_dom"/>
</dbReference>
<dbReference type="InterPro" id="IPR011868">
    <property type="entry name" value="ModC_ABC_ATP-bd"/>
</dbReference>
<dbReference type="InterPro" id="IPR050334">
    <property type="entry name" value="Molybdenum_import_ModC"/>
</dbReference>
<dbReference type="InterPro" id="IPR004606">
    <property type="entry name" value="Mop_domain"/>
</dbReference>
<dbReference type="InterPro" id="IPR027417">
    <property type="entry name" value="P-loop_NTPase"/>
</dbReference>
<dbReference type="InterPro" id="IPR005116">
    <property type="entry name" value="Transp-assoc_OB_typ1"/>
</dbReference>
<dbReference type="NCBIfam" id="TIGR02142">
    <property type="entry name" value="modC_ABC"/>
    <property type="match status" value="1"/>
</dbReference>
<dbReference type="NCBIfam" id="TIGR00638">
    <property type="entry name" value="Mop"/>
    <property type="match status" value="1"/>
</dbReference>
<dbReference type="NCBIfam" id="NF008355">
    <property type="entry name" value="PRK11144.1"/>
    <property type="match status" value="1"/>
</dbReference>
<dbReference type="PANTHER" id="PTHR43514">
    <property type="entry name" value="ABC TRANSPORTER I FAMILY MEMBER 10"/>
    <property type="match status" value="1"/>
</dbReference>
<dbReference type="PANTHER" id="PTHR43514:SF4">
    <property type="entry name" value="ABC TRANSPORTER I FAMILY MEMBER 10"/>
    <property type="match status" value="1"/>
</dbReference>
<dbReference type="Pfam" id="PF00005">
    <property type="entry name" value="ABC_tran"/>
    <property type="match status" value="1"/>
</dbReference>
<dbReference type="Pfam" id="PF03459">
    <property type="entry name" value="TOBE"/>
    <property type="match status" value="1"/>
</dbReference>
<dbReference type="SMART" id="SM00382">
    <property type="entry name" value="AAA"/>
    <property type="match status" value="1"/>
</dbReference>
<dbReference type="SUPFAM" id="SSF50331">
    <property type="entry name" value="MOP-like"/>
    <property type="match status" value="1"/>
</dbReference>
<dbReference type="SUPFAM" id="SSF52540">
    <property type="entry name" value="P-loop containing nucleoside triphosphate hydrolases"/>
    <property type="match status" value="1"/>
</dbReference>
<dbReference type="PROSITE" id="PS00211">
    <property type="entry name" value="ABC_TRANSPORTER_1"/>
    <property type="match status" value="1"/>
</dbReference>
<dbReference type="PROSITE" id="PS50893">
    <property type="entry name" value="ABC_TRANSPORTER_2"/>
    <property type="match status" value="1"/>
</dbReference>
<dbReference type="PROSITE" id="PS51241">
    <property type="entry name" value="MODC"/>
    <property type="match status" value="1"/>
</dbReference>
<dbReference type="PROSITE" id="PS51866">
    <property type="entry name" value="MOP"/>
    <property type="match status" value="1"/>
</dbReference>
<gene>
    <name evidence="1" type="primary">modC</name>
    <name type="ordered locus">SF0539</name>
    <name type="ordered locus">S0547</name>
</gene>
<proteinExistence type="inferred from homology"/>
<reference key="1">
    <citation type="journal article" date="2002" name="Nucleic Acids Res.">
        <title>Genome sequence of Shigella flexneri 2a: insights into pathogenicity through comparison with genomes of Escherichia coli K12 and O157.</title>
        <authorList>
            <person name="Jin Q."/>
            <person name="Yuan Z."/>
            <person name="Xu J."/>
            <person name="Wang Y."/>
            <person name="Shen Y."/>
            <person name="Lu W."/>
            <person name="Wang J."/>
            <person name="Liu H."/>
            <person name="Yang J."/>
            <person name="Yang F."/>
            <person name="Zhang X."/>
            <person name="Zhang J."/>
            <person name="Yang G."/>
            <person name="Wu H."/>
            <person name="Qu D."/>
            <person name="Dong J."/>
            <person name="Sun L."/>
            <person name="Xue Y."/>
            <person name="Zhao A."/>
            <person name="Gao Y."/>
            <person name="Zhu J."/>
            <person name="Kan B."/>
            <person name="Ding K."/>
            <person name="Chen S."/>
            <person name="Cheng H."/>
            <person name="Yao Z."/>
            <person name="He B."/>
            <person name="Chen R."/>
            <person name="Ma D."/>
            <person name="Qiang B."/>
            <person name="Wen Y."/>
            <person name="Hou Y."/>
            <person name="Yu J."/>
        </authorList>
    </citation>
    <scope>NUCLEOTIDE SEQUENCE [LARGE SCALE GENOMIC DNA]</scope>
    <source>
        <strain>301 / Serotype 2a</strain>
    </source>
</reference>
<reference key="2">
    <citation type="journal article" date="2003" name="Infect. Immun.">
        <title>Complete genome sequence and comparative genomics of Shigella flexneri serotype 2a strain 2457T.</title>
        <authorList>
            <person name="Wei J."/>
            <person name="Goldberg M.B."/>
            <person name="Burland V."/>
            <person name="Venkatesan M.M."/>
            <person name="Deng W."/>
            <person name="Fournier G."/>
            <person name="Mayhew G.F."/>
            <person name="Plunkett G. III"/>
            <person name="Rose D.J."/>
            <person name="Darling A."/>
            <person name="Mau B."/>
            <person name="Perna N.T."/>
            <person name="Payne S.M."/>
            <person name="Runyen-Janecky L.J."/>
            <person name="Zhou S."/>
            <person name="Schwartz D.C."/>
            <person name="Blattner F.R."/>
        </authorList>
    </citation>
    <scope>NUCLEOTIDE SEQUENCE [LARGE SCALE GENOMIC DNA]</scope>
    <source>
        <strain>ATCC 700930 / 2457T / Serotype 2a</strain>
    </source>
</reference>
<evidence type="ECO:0000255" key="1">
    <source>
        <dbReference type="HAMAP-Rule" id="MF_01705"/>
    </source>
</evidence>
<evidence type="ECO:0000255" key="2">
    <source>
        <dbReference type="PROSITE-ProRule" id="PRU01213"/>
    </source>
</evidence>
<protein>
    <recommendedName>
        <fullName evidence="1">Molybdenum import ATP-binding protein ModC</fullName>
        <ecNumber evidence="1">7.3.2.5</ecNumber>
    </recommendedName>
</protein>
<comment type="function">
    <text evidence="1">Part of the ABC transporter complex ModABC involved in molybdenum import. Responsible for energy coupling to the transport system.</text>
</comment>
<comment type="catalytic activity">
    <reaction evidence="1">
        <text>molybdate(out) + ATP + H2O = molybdate(in) + ADP + phosphate + H(+)</text>
        <dbReference type="Rhea" id="RHEA:22020"/>
        <dbReference type="ChEBI" id="CHEBI:15377"/>
        <dbReference type="ChEBI" id="CHEBI:15378"/>
        <dbReference type="ChEBI" id="CHEBI:30616"/>
        <dbReference type="ChEBI" id="CHEBI:36264"/>
        <dbReference type="ChEBI" id="CHEBI:43474"/>
        <dbReference type="ChEBI" id="CHEBI:456216"/>
        <dbReference type="EC" id="7.3.2.5"/>
    </reaction>
</comment>
<comment type="subunit">
    <text evidence="1">The complex is composed of two ATP-binding proteins (ModC), two transmembrane proteins (ModB) and a solute-binding protein (ModA).</text>
</comment>
<comment type="subcellular location">
    <subcellularLocation>
        <location evidence="1">Cell inner membrane</location>
        <topology evidence="1">Peripheral membrane protein</topology>
    </subcellularLocation>
</comment>
<comment type="similarity">
    <text evidence="1">Belongs to the ABC transporter superfamily. Molybdate importer (TC 3.A.1.8) family.</text>
</comment>
<name>MODC_SHIFL</name>
<keyword id="KW-0067">ATP-binding</keyword>
<keyword id="KW-0997">Cell inner membrane</keyword>
<keyword id="KW-1003">Cell membrane</keyword>
<keyword id="KW-0472">Membrane</keyword>
<keyword id="KW-0500">Molybdenum</keyword>
<keyword id="KW-0547">Nucleotide-binding</keyword>
<keyword id="KW-1185">Reference proteome</keyword>
<keyword id="KW-1278">Translocase</keyword>
<keyword id="KW-0813">Transport</keyword>
<feature type="chain" id="PRO_0000092558" description="Molybdenum import ATP-binding protein ModC">
    <location>
        <begin position="1"/>
        <end position="352"/>
    </location>
</feature>
<feature type="domain" description="ABC transporter" evidence="1">
    <location>
        <begin position="1"/>
        <end position="229"/>
    </location>
</feature>
<feature type="domain" description="Mop" evidence="2">
    <location>
        <begin position="289"/>
        <end position="352"/>
    </location>
</feature>
<feature type="binding site" evidence="1">
    <location>
        <begin position="31"/>
        <end position="38"/>
    </location>
    <ligand>
        <name>ATP</name>
        <dbReference type="ChEBI" id="CHEBI:30616"/>
    </ligand>
</feature>
<accession>P59738</accession>
<sequence>MLELNFSQTLGNHCLTINETLPANGITAIFGVSGAGKTSLINAISGLTRPQKGRIVLNGRVLNDAEKGICLTPEKRRVGYVFQDARLFPHYKVRGNLRYGMSKSMVDQFDKLVALLGIEPLLDRLPGSLSGGEKQRVAIGRALLTAPELLLLDEPLASLDIPRKRELLPYLQRLTREINIPMLYVSHSLDEILHLADRVMVLENGQVKAFGALEEVWGSSVMNPWLPKEQQSSILKVTVLEHHPHYAMTALALGDQHLWVNKLGEPLQAALRIRIQASDVSLVLQPPQQTSIRNVLRAKVVNSYDDNGQVEVELEVGGKTLWARISPWARDELAIKPGLWLYAQIKSVSITA</sequence>
<organism>
    <name type="scientific">Shigella flexneri</name>
    <dbReference type="NCBI Taxonomy" id="623"/>
    <lineage>
        <taxon>Bacteria</taxon>
        <taxon>Pseudomonadati</taxon>
        <taxon>Pseudomonadota</taxon>
        <taxon>Gammaproteobacteria</taxon>
        <taxon>Enterobacterales</taxon>
        <taxon>Enterobacteriaceae</taxon>
        <taxon>Shigella</taxon>
    </lineage>
</organism>